<reference key="1">
    <citation type="journal article" date="2008" name="Biol. Direct">
        <title>Complete genome sequence of the extremely acidophilic methanotroph isolate V4, Methylacidiphilum infernorum, a representative of the bacterial phylum Verrucomicrobia.</title>
        <authorList>
            <person name="Hou S."/>
            <person name="Makarova K.S."/>
            <person name="Saw J.H."/>
            <person name="Senin P."/>
            <person name="Ly B.V."/>
            <person name="Zhou Z."/>
            <person name="Ren Y."/>
            <person name="Wang J."/>
            <person name="Galperin M.Y."/>
            <person name="Omelchenko M.V."/>
            <person name="Wolf Y.I."/>
            <person name="Yutin N."/>
            <person name="Koonin E.V."/>
            <person name="Stott M.B."/>
            <person name="Mountain B.W."/>
            <person name="Crowe M.A."/>
            <person name="Smirnova A.V."/>
            <person name="Dunfield P.F."/>
            <person name="Feng L."/>
            <person name="Wang L."/>
            <person name="Alam M."/>
        </authorList>
    </citation>
    <scope>NUCLEOTIDE SEQUENCE [LARGE SCALE GENOMIC DNA]</scope>
    <source>
        <strain>Isolate V4</strain>
    </source>
</reference>
<proteinExistence type="inferred from homology"/>
<sequence>MGIKDFRPLTPVQRFTSLDDFSDITKTEPEWDLTEPYKKKGGRNNYGRITARHRGGGHKQRYRIIDFKRDKTGIFATVEAIEYDPLRTARIALLRYDDQEKRYIIAPQELKVGSRVVSGPDAPPEVGNSLPLKNIPSGLPIYNIELVPGKGGQLVRSAGSSARMMGLDKEYAIVKLPSGEIRKVCAECYATVGQVSNPDHFNKSLGKAGRTRWLGWRPRVRGVAMNPVDHPNGGGQGKSKGGGGWQQLESPWGKPAKGKKTRHKRKNSTKFIIERRPKKKKKK</sequence>
<gene>
    <name evidence="1" type="primary">rplB</name>
    <name type="ordered locus">Minf_0686</name>
</gene>
<keyword id="KW-0687">Ribonucleoprotein</keyword>
<keyword id="KW-0689">Ribosomal protein</keyword>
<keyword id="KW-0694">RNA-binding</keyword>
<keyword id="KW-0699">rRNA-binding</keyword>
<dbReference type="EMBL" id="CP000975">
    <property type="protein sequence ID" value="ACD82741.1"/>
    <property type="molecule type" value="Genomic_DNA"/>
</dbReference>
<dbReference type="RefSeq" id="WP_012463023.1">
    <property type="nucleotide sequence ID" value="NC_010794.1"/>
</dbReference>
<dbReference type="SMR" id="B3E0I7"/>
<dbReference type="STRING" id="481448.Minf_0686"/>
<dbReference type="KEGG" id="min:Minf_0686"/>
<dbReference type="eggNOG" id="COG0090">
    <property type="taxonomic scope" value="Bacteria"/>
</dbReference>
<dbReference type="HOGENOM" id="CLU_036235_2_1_0"/>
<dbReference type="OrthoDB" id="9778722at2"/>
<dbReference type="Proteomes" id="UP000009149">
    <property type="component" value="Chromosome"/>
</dbReference>
<dbReference type="GO" id="GO:0015934">
    <property type="term" value="C:large ribosomal subunit"/>
    <property type="evidence" value="ECO:0007669"/>
    <property type="project" value="InterPro"/>
</dbReference>
<dbReference type="GO" id="GO:0019843">
    <property type="term" value="F:rRNA binding"/>
    <property type="evidence" value="ECO:0007669"/>
    <property type="project" value="UniProtKB-UniRule"/>
</dbReference>
<dbReference type="GO" id="GO:0003735">
    <property type="term" value="F:structural constituent of ribosome"/>
    <property type="evidence" value="ECO:0007669"/>
    <property type="project" value="InterPro"/>
</dbReference>
<dbReference type="GO" id="GO:0016740">
    <property type="term" value="F:transferase activity"/>
    <property type="evidence" value="ECO:0007669"/>
    <property type="project" value="InterPro"/>
</dbReference>
<dbReference type="GO" id="GO:0002181">
    <property type="term" value="P:cytoplasmic translation"/>
    <property type="evidence" value="ECO:0007669"/>
    <property type="project" value="TreeGrafter"/>
</dbReference>
<dbReference type="FunFam" id="2.30.30.30:FF:000001">
    <property type="entry name" value="50S ribosomal protein L2"/>
    <property type="match status" value="1"/>
</dbReference>
<dbReference type="FunFam" id="2.40.50.140:FF:000003">
    <property type="entry name" value="50S ribosomal protein L2"/>
    <property type="match status" value="1"/>
</dbReference>
<dbReference type="FunFam" id="4.10.950.10:FF:000001">
    <property type="entry name" value="50S ribosomal protein L2"/>
    <property type="match status" value="1"/>
</dbReference>
<dbReference type="Gene3D" id="2.30.30.30">
    <property type="match status" value="1"/>
</dbReference>
<dbReference type="Gene3D" id="2.40.50.140">
    <property type="entry name" value="Nucleic acid-binding proteins"/>
    <property type="match status" value="1"/>
</dbReference>
<dbReference type="Gene3D" id="4.10.950.10">
    <property type="entry name" value="Ribosomal protein L2, domain 3"/>
    <property type="match status" value="1"/>
</dbReference>
<dbReference type="HAMAP" id="MF_01320_B">
    <property type="entry name" value="Ribosomal_uL2_B"/>
    <property type="match status" value="1"/>
</dbReference>
<dbReference type="InterPro" id="IPR012340">
    <property type="entry name" value="NA-bd_OB-fold"/>
</dbReference>
<dbReference type="InterPro" id="IPR014722">
    <property type="entry name" value="Rib_uL2_dom2"/>
</dbReference>
<dbReference type="InterPro" id="IPR002171">
    <property type="entry name" value="Ribosomal_uL2"/>
</dbReference>
<dbReference type="InterPro" id="IPR005880">
    <property type="entry name" value="Ribosomal_uL2_bac/org-type"/>
</dbReference>
<dbReference type="InterPro" id="IPR022669">
    <property type="entry name" value="Ribosomal_uL2_C"/>
</dbReference>
<dbReference type="InterPro" id="IPR022671">
    <property type="entry name" value="Ribosomal_uL2_CS"/>
</dbReference>
<dbReference type="InterPro" id="IPR014726">
    <property type="entry name" value="Ribosomal_uL2_dom3"/>
</dbReference>
<dbReference type="InterPro" id="IPR022666">
    <property type="entry name" value="Ribosomal_uL2_RNA-bd_dom"/>
</dbReference>
<dbReference type="InterPro" id="IPR008991">
    <property type="entry name" value="Translation_prot_SH3-like_sf"/>
</dbReference>
<dbReference type="NCBIfam" id="TIGR01171">
    <property type="entry name" value="rplB_bact"/>
    <property type="match status" value="1"/>
</dbReference>
<dbReference type="PANTHER" id="PTHR13691:SF5">
    <property type="entry name" value="LARGE RIBOSOMAL SUBUNIT PROTEIN UL2M"/>
    <property type="match status" value="1"/>
</dbReference>
<dbReference type="PANTHER" id="PTHR13691">
    <property type="entry name" value="RIBOSOMAL PROTEIN L2"/>
    <property type="match status" value="1"/>
</dbReference>
<dbReference type="Pfam" id="PF00181">
    <property type="entry name" value="Ribosomal_L2"/>
    <property type="match status" value="1"/>
</dbReference>
<dbReference type="Pfam" id="PF03947">
    <property type="entry name" value="Ribosomal_L2_C"/>
    <property type="match status" value="1"/>
</dbReference>
<dbReference type="PIRSF" id="PIRSF002158">
    <property type="entry name" value="Ribosomal_L2"/>
    <property type="match status" value="1"/>
</dbReference>
<dbReference type="SMART" id="SM01383">
    <property type="entry name" value="Ribosomal_L2"/>
    <property type="match status" value="1"/>
</dbReference>
<dbReference type="SMART" id="SM01382">
    <property type="entry name" value="Ribosomal_L2_C"/>
    <property type="match status" value="1"/>
</dbReference>
<dbReference type="SUPFAM" id="SSF50249">
    <property type="entry name" value="Nucleic acid-binding proteins"/>
    <property type="match status" value="1"/>
</dbReference>
<dbReference type="SUPFAM" id="SSF50104">
    <property type="entry name" value="Translation proteins SH3-like domain"/>
    <property type="match status" value="1"/>
</dbReference>
<dbReference type="PROSITE" id="PS00467">
    <property type="entry name" value="RIBOSOMAL_L2"/>
    <property type="match status" value="1"/>
</dbReference>
<name>RL2_METI4</name>
<protein>
    <recommendedName>
        <fullName evidence="1">Large ribosomal subunit protein uL2</fullName>
    </recommendedName>
    <alternativeName>
        <fullName evidence="3">50S ribosomal protein L2</fullName>
    </alternativeName>
</protein>
<comment type="function">
    <text evidence="1">One of the primary rRNA binding proteins. Required for association of the 30S and 50S subunits to form the 70S ribosome, for tRNA binding and peptide bond formation. It has been suggested to have peptidyltransferase activity; this is somewhat controversial. Makes several contacts with the 16S rRNA in the 70S ribosome.</text>
</comment>
<comment type="subunit">
    <text evidence="1">Part of the 50S ribosomal subunit. Forms a bridge to the 30S subunit in the 70S ribosome.</text>
</comment>
<comment type="similarity">
    <text evidence="1">Belongs to the universal ribosomal protein uL2 family.</text>
</comment>
<feature type="chain" id="PRO_1000141577" description="Large ribosomal subunit protein uL2">
    <location>
        <begin position="1"/>
        <end position="283"/>
    </location>
</feature>
<feature type="region of interest" description="Disordered" evidence="2">
    <location>
        <begin position="34"/>
        <end position="53"/>
    </location>
</feature>
<feature type="region of interest" description="Disordered" evidence="2">
    <location>
        <begin position="224"/>
        <end position="283"/>
    </location>
</feature>
<feature type="compositionally biased region" description="Gly residues" evidence="2">
    <location>
        <begin position="232"/>
        <end position="245"/>
    </location>
</feature>
<feature type="compositionally biased region" description="Basic residues" evidence="2">
    <location>
        <begin position="256"/>
        <end position="268"/>
    </location>
</feature>
<organism>
    <name type="scientific">Methylacidiphilum infernorum (isolate V4)</name>
    <name type="common">Methylokorus infernorum (strain V4)</name>
    <dbReference type="NCBI Taxonomy" id="481448"/>
    <lineage>
        <taxon>Bacteria</taxon>
        <taxon>Pseudomonadati</taxon>
        <taxon>Verrucomicrobiota</taxon>
        <taxon>Methylacidiphilae</taxon>
        <taxon>Methylacidiphilales</taxon>
        <taxon>Methylacidiphilaceae</taxon>
        <taxon>Methylacidiphilum (ex Ratnadevi et al. 2023)</taxon>
    </lineage>
</organism>
<accession>B3E0I7</accession>
<evidence type="ECO:0000255" key="1">
    <source>
        <dbReference type="HAMAP-Rule" id="MF_01320"/>
    </source>
</evidence>
<evidence type="ECO:0000256" key="2">
    <source>
        <dbReference type="SAM" id="MobiDB-lite"/>
    </source>
</evidence>
<evidence type="ECO:0000305" key="3"/>